<comment type="function">
    <text evidence="6 8 9 13 14 15 16 17">Receptor for class I MHC antigens. Recognizes a broad spectrum of HLA-A, HLA-B, HLA-C, HLA-G and HLA-F alleles (PubMed:16455647, PubMed:28636952). Receptor for H301/UL18, a human cytomegalovirus class I MHC homolog. Ligand binding results in inhibitory signals and down-regulation of the immune response. Engagement of LILRB1 present on natural killer cells or T-cells by class I MHC molecules protects the target cells from lysis. Interaction with HLA-B or HLA-E leads to inhibition of FCER1A signaling and serotonin release. Inhibits FCGR1A-mediated phosphorylation of cellular proteins and mobilization of intracellular calcium ions (PubMed:11907092, PubMed:9285411, PubMed:9842885). Recognizes HLA-G in complex with B2M/beta-2 microglobulin and a nonamer self-peptide (PubMed:16455647). Upon interaction with peptide-bound HLA-G-B2M complex, triggers secretion of growth-promoting factors by decidual NK cells (PubMed:19304799, PubMed:29262349). Reprograms B cells toward an immune suppressive phenotype (PubMed:24453251).</text>
</comment>
<comment type="subunit">
    <text evidence="4 6 8 14 16 17">Binds PTPN6 when phosphorylated (PubMed:9285411). Binds FCER1A and FCGR1A (PubMed:11907092, PubMed:9842885). Interacts with human cytomegalovirus/HHV-5 protein UL18 (PubMed:10591185). Interacts with peptide-bound HLA-G-B2M complex (PubMed:16455647). Interacts with peptide-bound HLA-F-B2M complex but not with peptide-free HLA-F open conformer. It does not probe the peptide sequence directly (PubMed:28636952).</text>
</comment>
<comment type="interaction">
    <interactant intactId="EBI-2805262">
        <id>Q8NHL6</id>
    </interactant>
    <interactant intactId="EBI-1043063">
        <id>P17693</id>
        <label>HLA-G</label>
    </interactant>
    <organismsDiffer>false</organismsDiffer>
    <experiments>8</experiments>
</comment>
<comment type="interaction">
    <interactant intactId="EBI-2805262">
        <id>Q8NHL6</id>
    </interactant>
    <interactant intactId="EBI-78260">
        <id>P29350</id>
        <label>PTPN6</label>
    </interactant>
    <organismsDiffer>false</organismsDiffer>
    <experiments>4</experiments>
</comment>
<comment type="subcellular location">
    <subcellularLocation>
        <location evidence="11 13 15 28">Cell membrane</location>
        <topology evidence="1">Single-pass type I membrane protein</topology>
    </subcellularLocation>
</comment>
<comment type="subcellular location">
    <molecule>Isoform 5</molecule>
    <subcellularLocation>
        <location evidence="10">Secreted</location>
    </subcellularLocation>
</comment>
<comment type="alternative products">
    <event type="alternative splicing"/>
    <isoform>
        <id>Q8NHL6-1</id>
        <name>1</name>
        <sequence type="displayed"/>
    </isoform>
    <isoform>
        <id>Q8NHL6-2</id>
        <name>2</name>
        <sequence type="described" ref="VSP_008456"/>
    </isoform>
    <isoform>
        <id>Q8NHL6-3</id>
        <name>3</name>
        <sequence type="described" ref="VSP_008456 VSP_008457"/>
    </isoform>
    <isoform>
        <id>Q8NHL6-4</id>
        <name>4</name>
        <sequence type="described" ref="VSP_008457"/>
    </isoform>
    <isoform>
        <id>Q8NHL6-5</id>
        <name>5</name>
        <name>65 Kda</name>
        <name>sLILRB1</name>
        <sequence type="described" ref="VSP_008456 VSP_057087 VSP_057088"/>
    </isoform>
</comment>
<comment type="tissue specificity">
    <text evidence="9 11 13 15 16 17">Expressed in B cells, monocytes and various dendritic cell (DC) subsets including myeloid, plasmacytoid and tolerogenic DCs (at protein level) (PubMed:20448110, PubMed:24453251, PubMed:9285411, PubMed:9842885). Expressed in decidual macrophages (at protein level) (PubMed:19304799). Expressed in decidual NK cells (at protein level) (PubMed:29262349).</text>
</comment>
<comment type="domain">
    <text>Contains 4 copies of a cytoplasmic motif that is referred to as the immunoreceptor tyrosine-based inhibitor motif (ITIM). This motif is involved in modulation of cellular responses. The phosphorylated ITIM motif can bind the SH2 domain of several SH2-containing phosphatases.</text>
</comment>
<comment type="PTM">
    <text evidence="6 16 17">Phosphorylated on tyrosine residues. Dephosphorylated by PTPN6.</text>
</comment>
<comment type="miscellaneous">
    <molecule>Isoform 5</molecule>
    <text evidence="10">May act as dominant negative regulator and block the interaction between membrane-associated isoforms and HLA-class I.</text>
</comment>
<protein>
    <recommendedName>
        <fullName>Leukocyte immunoglobulin-like receptor subfamily B member 1</fullName>
        <shortName evidence="18">LIR-1</shortName>
        <shortName>Leukocyte immunoglobulin-like receptor 1</shortName>
    </recommendedName>
    <alternativeName>
        <fullName>CD85 antigen-like family member J</fullName>
    </alternativeName>
    <alternativeName>
        <fullName>Immunoglobulin-like transcript 2</fullName>
        <shortName evidence="18">ILT-2</shortName>
    </alternativeName>
    <alternativeName>
        <fullName>Monocyte/macrophage immunoglobulin-like receptor 7</fullName>
        <shortName>MIR-7</shortName>
    </alternativeName>
    <cdAntigenName evidence="19 22">CD85j</cdAntigenName>
</protein>
<sequence length="650" mass="70819">MTPILTVLICLGLSLGPRTHVQAGHLPKPTLWAEPGSVITQGSPVTLRCQGGQETQEYRLYREKKTALWITRIPQELVKKGQFPIPSITWEHAGRYRCYYGSDTAGRSESSDPLELVVTGAYIKPTLSAQPSPVVNSGGNVILQCDSQVAFDGFSLCKEGEDEHPQCLNSQPHARGSSRAIFSVGPVSPSRRWWYRCYAYDSNSPYEWSLPSDLLELLVLGVSKKPSLSVQPGPIVAPEETLTLQCGSDAGYNRFVLYKDGERDFLQLAGAQPQAGLSQANFTLGPVSRSYGGQYRCYGAHNLSSEWSAPSDPLDILIAGQFYDRVSLSVQPGPTVASGENVTLLCQSQGWMQTFLLTKEGAADDPWRLRSTYQSQKYQAEFPMGPVTSAHAGTYRCYGSQSSKPYLLTHPSDPLELVVSGPSGGPSSPTTGPTSTSGPEDQPLTPTGSDPQSGLGRHLGVVIGILVAVILLLLLLLLLFLILRHRRQGKHWTSTQRKADFQHPAGAVGPEPTDRGLQWRSSPAADAQEENLYAAVKHTQPEDGVEMDTRSPHDEDPQAVTYAEVKHSRPRREMASPPSPLSGEFLDTKDRQAEEDRQMDTEAAASEAPQDVTYAQLHSLTLRREATEPPPSQEGPSPAVPSIYATLAIH</sequence>
<gene>
    <name evidence="21 29" type="primary">LILRB1</name>
    <name evidence="22" type="synonym">ILT2</name>
    <name evidence="23" type="synonym">LIR1</name>
    <name type="synonym">MIR7</name>
</gene>
<feature type="signal peptide" evidence="1">
    <location>
        <begin position="1"/>
        <end position="23"/>
    </location>
</feature>
<feature type="chain" id="PRO_0000014820" description="Leukocyte immunoglobulin-like receptor subfamily B member 1">
    <location>
        <begin position="24"/>
        <end position="650"/>
    </location>
</feature>
<feature type="topological domain" description="Extracellular" evidence="1">
    <location>
        <begin position="24"/>
        <end position="461"/>
    </location>
</feature>
<feature type="transmembrane region" description="Helical" evidence="1">
    <location>
        <begin position="462"/>
        <end position="482"/>
    </location>
</feature>
<feature type="topological domain" description="Cytoplasmic" evidence="1">
    <location>
        <begin position="483"/>
        <end position="650"/>
    </location>
</feature>
<feature type="domain" description="Ig-like C2-type 1">
    <location>
        <begin position="27"/>
        <end position="115"/>
    </location>
</feature>
<feature type="domain" description="Ig-like C2-type 2">
    <location>
        <begin position="116"/>
        <end position="221"/>
    </location>
</feature>
<feature type="domain" description="Ig-like C2-type 3">
    <location>
        <begin position="222"/>
        <end position="312"/>
    </location>
</feature>
<feature type="domain" description="Ig-like C2-type 4">
    <location>
        <begin position="313"/>
        <end position="409"/>
    </location>
</feature>
<feature type="region of interest" description="Disordered" evidence="3">
    <location>
        <begin position="415"/>
        <end position="451"/>
    </location>
</feature>
<feature type="region of interest" description="Disordered" evidence="3">
    <location>
        <begin position="491"/>
        <end position="524"/>
    </location>
</feature>
<feature type="region of interest" description="Disordered" evidence="3">
    <location>
        <begin position="563"/>
        <end position="650"/>
    </location>
</feature>
<feature type="short sequence motif" description="ITIM motif 1">
    <location>
        <begin position="531"/>
        <end position="536"/>
    </location>
</feature>
<feature type="short sequence motif" description="ITIM motif 2">
    <location>
        <begin position="560"/>
        <end position="565"/>
    </location>
</feature>
<feature type="short sequence motif" description="ITIM motif 3">
    <location>
        <begin position="612"/>
        <end position="617"/>
    </location>
</feature>
<feature type="short sequence motif" description="ITIM motif 4">
    <location>
        <begin position="642"/>
        <end position="647"/>
    </location>
</feature>
<feature type="compositionally biased region" description="Low complexity" evidence="3">
    <location>
        <begin position="425"/>
        <end position="439"/>
    </location>
</feature>
<feature type="compositionally biased region" description="Basic and acidic residues" evidence="3">
    <location>
        <begin position="564"/>
        <end position="574"/>
    </location>
</feature>
<feature type="compositionally biased region" description="Basic and acidic residues" evidence="3">
    <location>
        <begin position="586"/>
        <end position="600"/>
    </location>
</feature>
<feature type="modified residue" description="Phosphotyrosine" evidence="27">
    <location>
        <position position="533"/>
    </location>
</feature>
<feature type="modified residue" description="Phosphotyrosine" evidence="27">
    <location>
        <position position="614"/>
    </location>
</feature>
<feature type="modified residue" description="Phosphotyrosine" evidence="27">
    <location>
        <position position="644"/>
    </location>
</feature>
<feature type="glycosylation site" description="N-linked (GlcNAc...) asparagine" evidence="1">
    <location>
        <position position="281"/>
    </location>
</feature>
<feature type="glycosylation site" description="N-linked (GlcNAc...) asparagine" evidence="1">
    <location>
        <position position="302"/>
    </location>
</feature>
<feature type="glycosylation site" description="N-linked (GlcNAc...) asparagine" evidence="1">
    <location>
        <position position="341"/>
    </location>
</feature>
<feature type="disulfide bond" evidence="5 30">
    <location>
        <begin position="49"/>
        <end position="98"/>
    </location>
</feature>
<feature type="disulfide bond" evidence="5 30">
    <location>
        <begin position="145"/>
        <end position="197"/>
    </location>
</feature>
<feature type="disulfide bond" evidence="5 30">
    <location>
        <begin position="157"/>
        <end position="167"/>
    </location>
</feature>
<feature type="disulfide bond" evidence="2 5 30">
    <location>
        <begin position="246"/>
        <end position="297"/>
    </location>
</feature>
<feature type="disulfide bond" evidence="2 5 30">
    <location>
        <begin position="346"/>
        <end position="397"/>
    </location>
</feature>
<feature type="splice variant" id="VSP_008456" description="In isoform 2, isoform 3 and isoform 5." evidence="20 25">
    <original>S</original>
    <variation>SA</variation>
    <location>
        <position position="437"/>
    </location>
</feature>
<feature type="splice variant" id="VSP_057087" description="In isoform 5." evidence="20">
    <original>L</original>
    <variation>E</variation>
    <location>
        <position position="455"/>
    </location>
</feature>
<feature type="splice variant" id="VSP_057088" description="In isoform 5." evidence="20">
    <location>
        <begin position="456"/>
        <end position="650"/>
    </location>
</feature>
<feature type="splice variant" id="VSP_008457" description="In isoform 3 and isoform 4." evidence="21 24 25">
    <original>R</original>
    <variation>RQ</variation>
    <location>
        <position position="550"/>
    </location>
</feature>
<feature type="sequence variant" id="VAR_016993" description="In dbSNP:rs1061679." evidence="7 10 12 16">
    <original>L</original>
    <variation>P</variation>
    <location>
        <position position="68"/>
    </location>
</feature>
<feature type="sequence variant" id="VAR_049888" description="In dbSNP:rs12460501." evidence="10 12">
    <original>A</original>
    <variation>T</variation>
    <location>
        <position position="93"/>
    </location>
</feature>
<feature type="sequence variant" id="VAR_016994" description="In dbSNP:rs1061680." evidence="7 10 12 16">
    <original>I</original>
    <variation>T</variation>
    <location>
        <position position="142"/>
    </location>
</feature>
<feature type="sequence variant" id="VAR_016995" description="In dbSNP:rs1061681." evidence="7 10 12 16">
    <original>S</original>
    <variation>I</variation>
    <location>
        <position position="155"/>
    </location>
</feature>
<feature type="sequence variant" id="VAR_059398" description="In dbSNP:rs1045818.">
    <original>H</original>
    <variation>Y</variation>
    <location>
        <position position="301"/>
    </location>
</feature>
<feature type="sequence variant" id="VAR_067316" description="In dbSNP:rs1138737.">
    <original>L</original>
    <variation>V</variation>
    <location>
        <position position="459"/>
    </location>
</feature>
<feature type="sequence variant" id="VAR_016996" description="In dbSNP:rs634222.">
    <original>L</original>
    <variation>F</variation>
    <location>
        <position position="620"/>
    </location>
</feature>
<feature type="sequence variant" id="VAR_067317" description="In dbSNP:rs16985478." evidence="7 12 16">
    <original>E</original>
    <variation>K</variation>
    <location>
        <position position="625"/>
    </location>
</feature>
<feature type="mutagenesis site" description="Impairs receptor phosphorylation and abolishes inhibition of serotonin release. No effect on PTPN6 binding; when associated with F-562." evidence="6">
    <original>Y</original>
    <variation>F</variation>
    <location>
        <position position="533"/>
    </location>
</feature>
<feature type="mutagenesis site" description="No effect on PTPN6 binding; when associated with F-533." evidence="6">
    <original>Y</original>
    <variation>F</variation>
    <location>
        <position position="562"/>
    </location>
</feature>
<feature type="mutagenesis site" description="No effect on PTPN6 binding. Abolishes PTPN6 binding; when associated with F-644." evidence="6">
    <original>Y</original>
    <variation>F</variation>
    <location>
        <position position="614"/>
    </location>
</feature>
<feature type="mutagenesis site" description="Reduces PTPN6 binding. Abolishes PTPN6 binding; when associated with F-614." evidence="6">
    <original>Y</original>
    <variation>F</variation>
    <location>
        <position position="644"/>
    </location>
</feature>
<feature type="sequence conflict" description="In Ref. 6; AAL36989." evidence="26" ref="6">
    <original>P</original>
    <variation>L</variation>
    <location>
        <position position="557"/>
    </location>
</feature>
<feature type="strand" evidence="32">
    <location>
        <begin position="30"/>
        <end position="35"/>
    </location>
</feature>
<feature type="strand" evidence="32">
    <location>
        <begin position="37"/>
        <end position="40"/>
    </location>
</feature>
<feature type="strand" evidence="32">
    <location>
        <begin position="45"/>
        <end position="50"/>
    </location>
</feature>
<feature type="strand" evidence="33">
    <location>
        <begin position="52"/>
        <end position="54"/>
    </location>
</feature>
<feature type="strand" evidence="32">
    <location>
        <begin position="58"/>
        <end position="65"/>
    </location>
</feature>
<feature type="helix" evidence="32">
    <location>
        <begin position="68"/>
        <end position="71"/>
    </location>
</feature>
<feature type="helix" evidence="32">
    <location>
        <begin position="75"/>
        <end position="78"/>
    </location>
</feature>
<feature type="turn" evidence="32">
    <location>
        <begin position="79"/>
        <end position="81"/>
    </location>
</feature>
<feature type="strand" evidence="32">
    <location>
        <begin position="82"/>
        <end position="87"/>
    </location>
</feature>
<feature type="helix" evidence="32">
    <location>
        <begin position="90"/>
        <end position="92"/>
    </location>
</feature>
<feature type="strand" evidence="32">
    <location>
        <begin position="94"/>
        <end position="102"/>
    </location>
</feature>
<feature type="turn" evidence="32">
    <location>
        <begin position="103"/>
        <end position="105"/>
    </location>
</feature>
<feature type="strand" evidence="32">
    <location>
        <begin position="114"/>
        <end position="119"/>
    </location>
</feature>
<feature type="strand" evidence="32">
    <location>
        <begin position="126"/>
        <end position="131"/>
    </location>
</feature>
<feature type="strand" evidence="32">
    <location>
        <begin position="133"/>
        <end position="136"/>
    </location>
</feature>
<feature type="strand" evidence="32">
    <location>
        <begin position="141"/>
        <end position="146"/>
    </location>
</feature>
<feature type="strand" evidence="32">
    <location>
        <begin position="152"/>
        <end position="159"/>
    </location>
</feature>
<feature type="strand" evidence="37">
    <location>
        <begin position="161"/>
        <end position="163"/>
    </location>
</feature>
<feature type="strand" evidence="32">
    <location>
        <begin position="167"/>
        <end position="169"/>
    </location>
</feature>
<feature type="helix" evidence="31">
    <location>
        <begin position="172"/>
        <end position="174"/>
    </location>
</feature>
<feature type="helix" evidence="37">
    <location>
        <begin position="175"/>
        <end position="177"/>
    </location>
</feature>
<feature type="strand" evidence="32">
    <location>
        <begin position="179"/>
        <end position="184"/>
    </location>
</feature>
<feature type="strand" evidence="36">
    <location>
        <begin position="189"/>
        <end position="191"/>
    </location>
</feature>
<feature type="strand" evidence="32">
    <location>
        <begin position="193"/>
        <end position="200"/>
    </location>
</feature>
<feature type="strand" evidence="34">
    <location>
        <begin position="204"/>
        <end position="208"/>
    </location>
</feature>
<feature type="strand" evidence="32">
    <location>
        <begin position="215"/>
        <end position="220"/>
    </location>
</feature>
<feature type="strand" evidence="38">
    <location>
        <begin position="227"/>
        <end position="232"/>
    </location>
</feature>
<feature type="strand" evidence="38">
    <location>
        <begin position="234"/>
        <end position="236"/>
    </location>
</feature>
<feature type="strand" evidence="38">
    <location>
        <begin position="243"/>
        <end position="250"/>
    </location>
</feature>
<feature type="strand" evidence="38">
    <location>
        <begin position="253"/>
        <end position="259"/>
    </location>
</feature>
<feature type="strand" evidence="38">
    <location>
        <begin position="266"/>
        <end position="270"/>
    </location>
</feature>
<feature type="strand" evidence="37">
    <location>
        <begin position="274"/>
        <end position="276"/>
    </location>
</feature>
<feature type="strand" evidence="38">
    <location>
        <begin position="277"/>
        <end position="283"/>
    </location>
</feature>
<feature type="helix" evidence="38">
    <location>
        <begin position="289"/>
        <end position="291"/>
    </location>
</feature>
<feature type="strand" evidence="38">
    <location>
        <begin position="293"/>
        <end position="305"/>
    </location>
</feature>
<feature type="strand" evidence="38">
    <location>
        <begin position="314"/>
        <end position="318"/>
    </location>
</feature>
<feature type="strand" evidence="38">
    <location>
        <begin position="326"/>
        <end position="332"/>
    </location>
</feature>
<feature type="strand" evidence="38">
    <location>
        <begin position="334"/>
        <end position="336"/>
    </location>
</feature>
<feature type="strand" evidence="38">
    <location>
        <begin position="340"/>
        <end position="350"/>
    </location>
</feature>
<feature type="strand" evidence="38">
    <location>
        <begin position="353"/>
        <end position="361"/>
    </location>
</feature>
<feature type="strand" evidence="38">
    <location>
        <begin position="367"/>
        <end position="370"/>
    </location>
</feature>
<feature type="strand" evidence="38">
    <location>
        <begin position="372"/>
        <end position="374"/>
    </location>
</feature>
<feature type="strand" evidence="38">
    <location>
        <begin position="377"/>
        <end position="386"/>
    </location>
</feature>
<feature type="helix" evidence="38">
    <location>
        <begin position="389"/>
        <end position="391"/>
    </location>
</feature>
<feature type="strand" evidence="38">
    <location>
        <begin position="393"/>
        <end position="400"/>
    </location>
</feature>
<feature type="strand" evidence="35">
    <location>
        <begin position="404"/>
        <end position="408"/>
    </location>
</feature>
<feature type="strand" evidence="38">
    <location>
        <begin position="415"/>
        <end position="420"/>
    </location>
</feature>
<keyword id="KW-0002">3D-structure</keyword>
<keyword id="KW-1064">Adaptive immunity</keyword>
<keyword id="KW-0025">Alternative splicing</keyword>
<keyword id="KW-1003">Cell membrane</keyword>
<keyword id="KW-1015">Disulfide bond</keyword>
<keyword id="KW-0325">Glycoprotein</keyword>
<keyword id="KW-0391">Immunity</keyword>
<keyword id="KW-0393">Immunoglobulin domain</keyword>
<keyword id="KW-0472">Membrane</keyword>
<keyword id="KW-0597">Phosphoprotein</keyword>
<keyword id="KW-1267">Proteomics identification</keyword>
<keyword id="KW-0675">Receptor</keyword>
<keyword id="KW-1185">Reference proteome</keyword>
<keyword id="KW-0677">Repeat</keyword>
<keyword id="KW-0964">Secreted</keyword>
<keyword id="KW-0732">Signal</keyword>
<keyword id="KW-0812">Transmembrane</keyword>
<keyword id="KW-1133">Transmembrane helix</keyword>
<proteinExistence type="evidence at protein level"/>
<reference key="1">
    <citation type="journal article" date="1997" name="Curr. Biol.">
        <title>A new human gene complex encoding the killer cell inhibitory receptors and related monocyte/macrophage receptors.</title>
        <authorList>
            <person name="Wagtmann N."/>
            <person name="Rojo S."/>
            <person name="Eichler E."/>
            <person name="Mohrenweiser H."/>
            <person name="Long E.O."/>
        </authorList>
    </citation>
    <scope>NUCLEOTIDE SEQUENCE [MRNA] (ISOFORM 4)</scope>
</reference>
<reference key="2">
    <citation type="journal article" date="1997" name="Immunity">
        <title>A novel immunoglobulin superfamily receptor for cellular and viral MHC class I molecules.</title>
        <authorList>
            <person name="Cosman D."/>
            <person name="Fanger N."/>
            <person name="Borges L."/>
            <person name="Kubin M."/>
            <person name="Chin W."/>
            <person name="Peterson L."/>
            <person name="Hsu M.-L."/>
        </authorList>
    </citation>
    <scope>NUCLEOTIDE SEQUENCE [MRNA] (ISOFORMS 1 AND 3)</scope>
    <scope>VARIANTS PRO-68; THR-142; ILE-155 AND LYS-625</scope>
    <scope>INTERACTION WITH H301 AND PTPN6</scope>
    <scope>PHOSPHORYLATION</scope>
    <scope>TISSUE SPECIFICITY</scope>
    <scope>FUNCTION</scope>
    <source>
        <tissue>Lymphoblast</tissue>
    </source>
</reference>
<reference key="3">
    <citation type="journal article" date="2000" name="Immunogenetics">
        <title>Genomic organization of the human leukocyte immunoglobulin-like receptors within the leukocyte receptor complex on chromosome 19q13.4.</title>
        <authorList>
            <person name="Liu W.R."/>
            <person name="Kim J."/>
            <person name="Nwankwo C."/>
            <person name="Ashworth L.K."/>
            <person name="Arm J.P."/>
        </authorList>
    </citation>
    <scope>NUCLEOTIDE SEQUENCE [GENOMIC DNA] (ISOFORM 1)</scope>
</reference>
<reference key="4">
    <citation type="journal article" date="2009" name="Eur. J. Immunol.">
        <title>Alternative mRNA splicing creates transcripts encoding soluble proteins from most LILR genes.</title>
        <authorList>
            <person name="Jones D.C."/>
            <person name="Roghanian A."/>
            <person name="Brown D.P."/>
            <person name="Chang C."/>
            <person name="Allen R.L."/>
            <person name="Trowsdale J."/>
            <person name="Young N.T."/>
        </authorList>
    </citation>
    <scope>NUCLEOTIDE SEQUENCE [MRNA] (ISOFORM 5)</scope>
    <scope>ALTERNATIVE SPLICING</scope>
    <scope>SUBCELLULAR LOCATION (ISOFORM 5)</scope>
    <scope>VARIANTS PRO-68; THR-93; THR-142 AND ILE-155</scope>
</reference>
<reference key="5">
    <citation type="journal article" date="2010" name="Hum. Immunol.">
        <title>LILRB1 polymorphism and surface phenotypes of natural killer cells.</title>
        <authorList>
            <person name="Davidson C.L."/>
            <person name="Li N.L."/>
            <person name="Burshtyn D.N."/>
        </authorList>
    </citation>
    <scope>NUCLEOTIDE SEQUENCE [GENOMIC DNA]</scope>
    <scope>VARIANTS PRO-68; THR-93; THR-142; ILE-155 AND LYS-625</scope>
</reference>
<reference key="6">
    <citation type="submission" date="2000-07" db="EMBL/GenBank/DDBJ databases">
        <authorList>
            <person name="Canavez F.C."/>
        </authorList>
    </citation>
    <scope>NUCLEOTIDE SEQUENCE [MRNA] (ISOFORM 2)</scope>
</reference>
<reference key="7">
    <citation type="journal article" date="2004" name="Nature">
        <title>The DNA sequence and biology of human chromosome 19.</title>
        <authorList>
            <person name="Grimwood J."/>
            <person name="Gordon L.A."/>
            <person name="Olsen A.S."/>
            <person name="Terry A."/>
            <person name="Schmutz J."/>
            <person name="Lamerdin J.E."/>
            <person name="Hellsten U."/>
            <person name="Goodstein D."/>
            <person name="Couronne O."/>
            <person name="Tran-Gyamfi M."/>
            <person name="Aerts A."/>
            <person name="Altherr M."/>
            <person name="Ashworth L."/>
            <person name="Bajorek E."/>
            <person name="Black S."/>
            <person name="Branscomb E."/>
            <person name="Caenepeel S."/>
            <person name="Carrano A.V."/>
            <person name="Caoile C."/>
            <person name="Chan Y.M."/>
            <person name="Christensen M."/>
            <person name="Cleland C.A."/>
            <person name="Copeland A."/>
            <person name="Dalin E."/>
            <person name="Dehal P."/>
            <person name="Denys M."/>
            <person name="Detter J.C."/>
            <person name="Escobar J."/>
            <person name="Flowers D."/>
            <person name="Fotopulos D."/>
            <person name="Garcia C."/>
            <person name="Georgescu A.M."/>
            <person name="Glavina T."/>
            <person name="Gomez M."/>
            <person name="Gonzales E."/>
            <person name="Groza M."/>
            <person name="Hammon N."/>
            <person name="Hawkins T."/>
            <person name="Haydu L."/>
            <person name="Ho I."/>
            <person name="Huang W."/>
            <person name="Israni S."/>
            <person name="Jett J."/>
            <person name="Kadner K."/>
            <person name="Kimball H."/>
            <person name="Kobayashi A."/>
            <person name="Larionov V."/>
            <person name="Leem S.-H."/>
            <person name="Lopez F."/>
            <person name="Lou Y."/>
            <person name="Lowry S."/>
            <person name="Malfatti S."/>
            <person name="Martinez D."/>
            <person name="McCready P.M."/>
            <person name="Medina C."/>
            <person name="Morgan J."/>
            <person name="Nelson K."/>
            <person name="Nolan M."/>
            <person name="Ovcharenko I."/>
            <person name="Pitluck S."/>
            <person name="Pollard M."/>
            <person name="Popkie A.P."/>
            <person name="Predki P."/>
            <person name="Quan G."/>
            <person name="Ramirez L."/>
            <person name="Rash S."/>
            <person name="Retterer J."/>
            <person name="Rodriguez A."/>
            <person name="Rogers S."/>
            <person name="Salamov A."/>
            <person name="Salazar A."/>
            <person name="She X."/>
            <person name="Smith D."/>
            <person name="Slezak T."/>
            <person name="Solovyev V."/>
            <person name="Thayer N."/>
            <person name="Tice H."/>
            <person name="Tsai M."/>
            <person name="Ustaszewska A."/>
            <person name="Vo N."/>
            <person name="Wagner M."/>
            <person name="Wheeler J."/>
            <person name="Wu K."/>
            <person name="Xie G."/>
            <person name="Yang J."/>
            <person name="Dubchak I."/>
            <person name="Furey T.S."/>
            <person name="DeJong P."/>
            <person name="Dickson M."/>
            <person name="Gordon D."/>
            <person name="Eichler E.E."/>
            <person name="Pennacchio L.A."/>
            <person name="Richardson P."/>
            <person name="Stubbs L."/>
            <person name="Rokhsar D.S."/>
            <person name="Myers R.M."/>
            <person name="Rubin E.M."/>
            <person name="Lucas S.M."/>
        </authorList>
    </citation>
    <scope>NUCLEOTIDE SEQUENCE [LARGE SCALE GENOMIC DNA]</scope>
</reference>
<reference key="8">
    <citation type="journal article" date="2004" name="Genome Res.">
        <title>The status, quality, and expansion of the NIH full-length cDNA project: the Mammalian Gene Collection (MGC).</title>
        <authorList>
            <consortium name="The MGC Project Team"/>
        </authorList>
    </citation>
    <scope>NUCLEOTIDE SEQUENCE [LARGE SCALE MRNA] (ISOFORM 1)</scope>
    <scope>VARIANTS PRO-68; THR-142; ILE-155 AND LYS-625</scope>
    <source>
        <tissue>B-cell</tissue>
    </source>
</reference>
<reference key="9">
    <citation type="journal article" date="1998" name="Eur. J. Immunol.">
        <title>The MHC class I binding proteins LIR-1 and LIR-2 inhibit Fc receptor-mediated signaling in monocytes.</title>
        <authorList>
            <person name="Fanger N.A."/>
            <person name="Cosman D."/>
            <person name="Peterson L."/>
            <person name="Braddy S.C."/>
            <person name="Maliszewski C.R."/>
            <person name="Borges L."/>
        </authorList>
    </citation>
    <scope>INTERACTION WITH PTPN6 AND FCGR1A</scope>
    <scope>PHOSPHORYLATION</scope>
    <scope>TISSUE SPECIFICITY</scope>
    <scope>FUNCTION</scope>
</reference>
<reference key="10">
    <citation type="journal article" date="1999" name="Immunity">
        <title>The inhibitory receptor LIR-1 uses a common binding interaction to recognize class I MHC molecules and the viral homolog UL18.</title>
        <authorList>
            <person name="Chapman T.L."/>
            <person name="Heikeman A.P."/>
            <person name="Bjorkman P.J."/>
        </authorList>
    </citation>
    <scope>INTERACTION WITH HHV-5 PROTEIN UL18</scope>
</reference>
<reference key="11">
    <citation type="journal article" date="2002" name="J. Immunol.">
        <title>Mutational analysis of immunoreceptor tyrosine-based inhibition motifs of the Ig-like transcript 2 (CD85j) leukocyte receptor.</title>
        <authorList>
            <person name="Bellon T."/>
            <person name="Kitzig F."/>
            <person name="Sayos J."/>
            <person name="Lopez-Botet M."/>
        </authorList>
    </citation>
    <scope>PHOSPHORYLATION AT TYR-533; TYR-614 AND TYR-644</scope>
    <scope>MUTAGENESIS OF TYR-533; TYR-562; TYR-614 AND TYR-644</scope>
    <scope>INTERACTION WITH FCER1A</scope>
    <scope>FUNCTION</scope>
</reference>
<reference key="12">
    <citation type="journal article" date="2006" name="J. Biol. Chem.">
        <title>Efficient leukocyte Ig-like receptor signaling and crystal structure of disulfide-linked HLA-G dimer.</title>
        <authorList>
            <person name="Shiroishi M."/>
            <person name="Kuroki K."/>
            <person name="Ose T."/>
            <person name="Rasubala L."/>
            <person name="Shiratori I."/>
            <person name="Arase H."/>
            <person name="Tsumoto K."/>
            <person name="Kumagai I."/>
            <person name="Kohda D."/>
            <person name="Maenaka K."/>
        </authorList>
    </citation>
    <scope>FUNCTION</scope>
    <scope>SUBUNIT</scope>
    <scope>INTERACTION WITH HLA-G</scope>
</reference>
<reference key="13">
    <citation type="journal article" date="2009" name="Proc. Natl. Acad. Sci. U.S.A.">
        <title>HLA-G homodimer-induced cytokine secretion through HLA-G receptors on human decidual macrophages and natural killer cells.</title>
        <authorList>
            <person name="Li C."/>
            <person name="Houser B.L."/>
            <person name="Nicotra M.L."/>
            <person name="Strominger J.L."/>
        </authorList>
    </citation>
    <scope>TISSUE SPECIFICITY</scope>
    <scope>FUNCTION</scope>
</reference>
<reference key="14">
    <citation type="journal article" date="2010" name="Blood">
        <title>Differentiation of type 1 T regulatory cells (Tr1) by tolerogenic DC-10 requires the IL-10-dependent ILT4/HLA-G pathway.</title>
        <authorList>
            <person name="Gregori S."/>
            <person name="Tomasoni D."/>
            <person name="Pacciani V."/>
            <person name="Scirpoli M."/>
            <person name="Battaglia M."/>
            <person name="Magnani C.F."/>
            <person name="Hauben E."/>
            <person name="Roncarolo M.G."/>
        </authorList>
    </citation>
    <scope>TISSUE SPECIFICITY</scope>
    <scope>SUBCELLULAR LOCATION</scope>
</reference>
<reference key="15">
    <citation type="journal article" date="2014" name="J. Immunol.">
        <title>Binding of HLA-G to ITIM-bearing Ig-like transcript 2 receptor suppresses B cell responses.</title>
        <authorList>
            <person name="Naji A."/>
            <person name="Menier C."/>
            <person name="Morandi F."/>
            <person name="Agaugue S."/>
            <person name="Maki G."/>
            <person name="Ferretti E."/>
            <person name="Bruel S."/>
            <person name="Pistoia V."/>
            <person name="Carosella E.D."/>
            <person name="Rouas-Freiss N."/>
        </authorList>
    </citation>
    <scope>FUNCTION</scope>
    <scope>TISSUE SPECIFICITY</scope>
    <scope>SUBCELLULAR LOCATION</scope>
</reference>
<reference key="16">
    <citation type="journal article" date="2017" name="Immunity">
        <title>Natural Killer Cells Promote Fetal Development through the Secretion of Growth-Promoting Factors.</title>
        <authorList>
            <person name="Fu B."/>
            <person name="Zhou Y."/>
            <person name="Ni X."/>
            <person name="Tong X."/>
            <person name="Xu X."/>
            <person name="Dong Z."/>
            <person name="Sun R."/>
            <person name="Tian Z."/>
            <person name="Wei H."/>
        </authorList>
    </citation>
    <scope>FUNCTION</scope>
    <scope>TISSUE SPECIFICITY</scope>
    <scope>SUBCELLULAR LOCATION</scope>
</reference>
<reference key="17">
    <citation type="journal article" date="2017" name="Immunity">
        <title>Human Leukocyte Antigen F Presents Peptides and Regulates Immunity through Interactions with NK Cell Receptors.</title>
        <authorList>
            <person name="Dulberger C.L."/>
            <person name="McMurtrey C.P."/>
            <person name="Holzemer A."/>
            <person name="Neu K.E."/>
            <person name="Liu V."/>
            <person name="Steinbach A.M."/>
            <person name="Garcia-Beltran W.F."/>
            <person name="Sulak M."/>
            <person name="Jabri B."/>
            <person name="Lynch V.J."/>
            <person name="Altfeld M."/>
            <person name="Hildebrand W.H."/>
            <person name="Adams E.J."/>
        </authorList>
    </citation>
    <scope>FUNCTION</scope>
    <scope>SUBUNIT</scope>
    <scope>INTERACTION WITH HLA-F</scope>
</reference>
<reference key="18">
    <citation type="journal article" date="2000" name="Immunity">
        <title>Crystal structure and ligand binding properties of the D1D2 region of the inhibitory receptor LIR-1 (ILT2).</title>
        <authorList>
            <person name="Chapman T.L."/>
            <person name="Heikema A.P."/>
            <person name="West A.P. Jr."/>
            <person name="Bjorkman P.J."/>
        </authorList>
    </citation>
    <scope>X-RAY CRYSTALLOGRAPHY (2.10 ANGSTROMS) OF 25-221</scope>
    <scope>DISULFIDE BONDS</scope>
</reference>
<dbReference type="EMBL" id="AF004230">
    <property type="protein sequence ID" value="AAB67710.1"/>
    <property type="molecule type" value="mRNA"/>
</dbReference>
<dbReference type="EMBL" id="AF009220">
    <property type="protein sequence ID" value="AAB63521.1"/>
    <property type="molecule type" value="mRNA"/>
</dbReference>
<dbReference type="EMBL" id="AF009221">
    <property type="protein sequence ID" value="AAB63522.1"/>
    <property type="molecule type" value="mRNA"/>
</dbReference>
<dbReference type="EMBL" id="AF189277">
    <property type="protein sequence ID" value="AAG08984.1"/>
    <property type="molecule type" value="Genomic_DNA"/>
</dbReference>
<dbReference type="EMBL" id="EU915608">
    <property type="protein sequence ID" value="ACK56074.1"/>
    <property type="molecule type" value="mRNA"/>
</dbReference>
<dbReference type="EMBL" id="HM135394">
    <property type="protein sequence ID" value="ADJ55944.1"/>
    <property type="molecule type" value="Genomic_DNA"/>
</dbReference>
<dbReference type="EMBL" id="HM135401">
    <property type="protein sequence ID" value="ADJ55951.1"/>
    <property type="molecule type" value="Genomic_DNA"/>
</dbReference>
<dbReference type="EMBL" id="AF283984">
    <property type="protein sequence ID" value="AAL36988.1"/>
    <property type="molecule type" value="mRNA"/>
</dbReference>
<dbReference type="EMBL" id="AF283985">
    <property type="protein sequence ID" value="AAL36989.1"/>
    <property type="molecule type" value="mRNA"/>
</dbReference>
<dbReference type="EMBL" id="AC009892">
    <property type="status" value="NOT_ANNOTATED_CDS"/>
    <property type="molecule type" value="Genomic_DNA"/>
</dbReference>
<dbReference type="EMBL" id="BC015731">
    <property type="protein sequence ID" value="AAH15731.1"/>
    <property type="molecule type" value="mRNA"/>
</dbReference>
<dbReference type="CCDS" id="CCDS42614.1">
    <molecule id="Q8NHL6-3"/>
</dbReference>
<dbReference type="CCDS" id="CCDS42615.1">
    <molecule id="Q8NHL6-2"/>
</dbReference>
<dbReference type="CCDS" id="CCDS42616.1">
    <molecule id="Q8NHL6-4"/>
</dbReference>
<dbReference type="CCDS" id="CCDS42617.1">
    <molecule id="Q8NHL6-1"/>
</dbReference>
<dbReference type="RefSeq" id="NP_001075106.2">
    <property type="nucleotide sequence ID" value="NM_001081637.2"/>
</dbReference>
<dbReference type="RefSeq" id="NP_001075107.2">
    <property type="nucleotide sequence ID" value="NM_001081638.3"/>
</dbReference>
<dbReference type="RefSeq" id="NP_001075108.2">
    <property type="nucleotide sequence ID" value="NM_001081639.3"/>
</dbReference>
<dbReference type="RefSeq" id="NP_001265327.2">
    <property type="nucleotide sequence ID" value="NM_001278398.2"/>
</dbReference>
<dbReference type="RefSeq" id="NP_001265328.2">
    <property type="nucleotide sequence ID" value="NM_001278399.2"/>
</dbReference>
<dbReference type="RefSeq" id="NP_006660.4">
    <property type="nucleotide sequence ID" value="NM_006669.6"/>
</dbReference>
<dbReference type="PDB" id="1G0X">
    <property type="method" value="X-ray"/>
    <property type="resolution" value="2.10 A"/>
    <property type="chains" value="A=25-221"/>
</dbReference>
<dbReference type="PDB" id="1P7Q">
    <property type="method" value="X-ray"/>
    <property type="resolution" value="3.40 A"/>
    <property type="chains" value="D=25-221"/>
</dbReference>
<dbReference type="PDB" id="1UFU">
    <property type="method" value="X-ray"/>
    <property type="resolution" value="3.00 A"/>
    <property type="chains" value="A=25-221"/>
</dbReference>
<dbReference type="PDB" id="1UGN">
    <property type="method" value="X-ray"/>
    <property type="resolution" value="1.80 A"/>
    <property type="chains" value="A=24-221"/>
</dbReference>
<dbReference type="PDB" id="1VDG">
    <property type="method" value="X-ray"/>
    <property type="resolution" value="2.80 A"/>
    <property type="chains" value="A/B=24-220"/>
</dbReference>
<dbReference type="PDB" id="3D2U">
    <property type="method" value="X-ray"/>
    <property type="resolution" value="2.21 A"/>
    <property type="chains" value="D/H=24-221"/>
</dbReference>
<dbReference type="PDB" id="4LL9">
    <property type="method" value="X-ray"/>
    <property type="resolution" value="2.69 A"/>
    <property type="chains" value="A/B/C=222-417"/>
</dbReference>
<dbReference type="PDB" id="4NO0">
    <property type="method" value="X-ray"/>
    <property type="resolution" value="2.70 A"/>
    <property type="chains" value="D=27-221"/>
</dbReference>
<dbReference type="PDB" id="5KNM">
    <property type="method" value="X-ray"/>
    <property type="resolution" value="3.30 A"/>
    <property type="chains" value="D=24-221"/>
</dbReference>
<dbReference type="PDB" id="6AEE">
    <property type="method" value="X-ray"/>
    <property type="resolution" value="3.30 A"/>
    <property type="chains" value="G/H=25-417"/>
</dbReference>
<dbReference type="PDB" id="6EWA">
    <property type="method" value="X-ray"/>
    <property type="resolution" value="2.39 A"/>
    <property type="chains" value="D/H=27-221"/>
</dbReference>
<dbReference type="PDB" id="6EWC">
    <property type="method" value="X-ray"/>
    <property type="resolution" value="3.20 A"/>
    <property type="chains" value="D/H=27-221"/>
</dbReference>
<dbReference type="PDB" id="6EWO">
    <property type="method" value="X-ray"/>
    <property type="resolution" value="2.30 A"/>
    <property type="chains" value="D/H=27-221"/>
</dbReference>
<dbReference type="PDB" id="6K60">
    <property type="method" value="X-ray"/>
    <property type="resolution" value="3.15 A"/>
    <property type="chains" value="D/H=24-220"/>
</dbReference>
<dbReference type="PDB" id="6ZDX">
    <property type="method" value="X-ray"/>
    <property type="resolution" value="3.00 A"/>
    <property type="chains" value="B=25-420"/>
</dbReference>
<dbReference type="PDB" id="7KFK">
    <property type="method" value="X-ray"/>
    <property type="resolution" value="2.63 A"/>
    <property type="chains" value="A/B=222-421"/>
</dbReference>
<dbReference type="PDBsum" id="1G0X"/>
<dbReference type="PDBsum" id="1P7Q"/>
<dbReference type="PDBsum" id="1UFU"/>
<dbReference type="PDBsum" id="1UGN"/>
<dbReference type="PDBsum" id="1VDG"/>
<dbReference type="PDBsum" id="3D2U"/>
<dbReference type="PDBsum" id="4LL9"/>
<dbReference type="PDBsum" id="4NO0"/>
<dbReference type="PDBsum" id="5KNM"/>
<dbReference type="PDBsum" id="6AEE"/>
<dbReference type="PDBsum" id="6EWA"/>
<dbReference type="PDBsum" id="6EWC"/>
<dbReference type="PDBsum" id="6EWO"/>
<dbReference type="PDBsum" id="6K60"/>
<dbReference type="PDBsum" id="6ZDX"/>
<dbReference type="PDBsum" id="7KFK"/>
<dbReference type="EMDB" id="EMD-22879"/>
<dbReference type="SMR" id="Q8NHL6"/>
<dbReference type="BioGRID" id="116070">
    <property type="interactions" value="13"/>
</dbReference>
<dbReference type="FunCoup" id="Q8NHL6">
    <property type="interactions" value="318"/>
</dbReference>
<dbReference type="IntAct" id="Q8NHL6">
    <property type="interactions" value="16"/>
</dbReference>
<dbReference type="MINT" id="Q8NHL6"/>
<dbReference type="STRING" id="9606.ENSP00000315997"/>
<dbReference type="GlyCosmos" id="Q8NHL6">
    <property type="glycosylation" value="3 sites, No reported glycans"/>
</dbReference>
<dbReference type="GlyGen" id="Q8NHL6">
    <property type="glycosylation" value="6 sites, 10 N-linked glycans (1 site), 1 O-linked glycan (1 site)"/>
</dbReference>
<dbReference type="iPTMnet" id="Q8NHL6"/>
<dbReference type="PhosphoSitePlus" id="Q8NHL6"/>
<dbReference type="BioMuta" id="LILRB1"/>
<dbReference type="DMDM" id="37537910"/>
<dbReference type="jPOST" id="Q8NHL6"/>
<dbReference type="MassIVE" id="Q8NHL6"/>
<dbReference type="PaxDb" id="9606-ENSP00000315997"/>
<dbReference type="PeptideAtlas" id="Q8NHL6"/>
<dbReference type="ProteomicsDB" id="73718">
    <molecule id="Q8NHL6-1"/>
</dbReference>
<dbReference type="ProteomicsDB" id="73719">
    <molecule id="Q8NHL6-2"/>
</dbReference>
<dbReference type="ProteomicsDB" id="73720">
    <molecule id="Q8NHL6-3"/>
</dbReference>
<dbReference type="ProteomicsDB" id="73721">
    <molecule id="Q8NHL6-4"/>
</dbReference>
<dbReference type="DNASU" id="10859"/>
<dbReference type="Ensembl" id="ENST00000612636.4">
    <molecule id="Q8NHL6-3"/>
    <property type="protein sequence ID" value="ENSP00000479887.1"/>
    <property type="gene ID" value="ENSG00000277807.5"/>
</dbReference>
<dbReference type="Ensembl" id="ENST00000616408.4">
    <property type="protein sequence ID" value="ENSP00000481700.1"/>
    <property type="gene ID" value="ENSG00000274669.5"/>
</dbReference>
<dbReference type="Ensembl" id="ENST00000617686.4">
    <molecule id="Q8NHL6-4"/>
    <property type="protein sequence ID" value="ENSP00000478282.1"/>
    <property type="gene ID" value="ENSG00000277807.5"/>
</dbReference>
<dbReference type="Ensembl" id="ENST00000618055.4">
    <molecule id="Q8NHL6-1"/>
    <property type="protein sequence ID" value="ENSP00000480365.1"/>
    <property type="gene ID" value="ENSG00000277807.5"/>
</dbReference>
<dbReference type="Ensembl" id="ENST00000618681.4">
    <molecule id="Q8NHL6-2"/>
    <property type="protein sequence ID" value="ENSP00000479753.1"/>
    <property type="gene ID" value="ENSG00000277807.5"/>
</dbReference>
<dbReference type="GeneID" id="10859"/>
<dbReference type="KEGG" id="hsa:10859"/>
<dbReference type="UCSC" id="uc032iow.2">
    <molecule id="Q8NHL6-1"/>
    <property type="organism name" value="human"/>
</dbReference>
<dbReference type="AGR" id="HGNC:6605"/>
<dbReference type="CTD" id="10859"/>
<dbReference type="DisGeNET" id="10859"/>
<dbReference type="GeneCards" id="LILRB1"/>
<dbReference type="HGNC" id="HGNC:6605">
    <property type="gene designation" value="LILRB1"/>
</dbReference>
<dbReference type="MIM" id="604811">
    <property type="type" value="gene"/>
</dbReference>
<dbReference type="neXtProt" id="NX_Q8NHL6"/>
<dbReference type="PharmGKB" id="PA30379"/>
<dbReference type="eggNOG" id="ENOG502RYEX">
    <property type="taxonomic scope" value="Eukaryota"/>
</dbReference>
<dbReference type="InParanoid" id="Q8NHL6"/>
<dbReference type="OrthoDB" id="6151406at2759"/>
<dbReference type="PAN-GO" id="Q8NHL6">
    <property type="GO annotations" value="3 GO annotations based on evolutionary models"/>
</dbReference>
<dbReference type="PhylomeDB" id="Q8NHL6"/>
<dbReference type="TreeFam" id="TF336644"/>
<dbReference type="PathwayCommons" id="Q8NHL6"/>
<dbReference type="Reactome" id="R-HSA-198933">
    <property type="pathway name" value="Immunoregulatory interactions between a Lymphoid and a non-Lymphoid cell"/>
</dbReference>
<dbReference type="SignaLink" id="Q8NHL6"/>
<dbReference type="SIGNOR" id="Q8NHL6"/>
<dbReference type="BioGRID-ORCS" id="10859">
    <property type="hits" value="12 hits in 1121 CRISPR screens"/>
</dbReference>
<dbReference type="ChiTaRS" id="LILRB1">
    <property type="organism name" value="human"/>
</dbReference>
<dbReference type="EvolutionaryTrace" id="Q8NHL6"/>
<dbReference type="GeneWiki" id="LILRB1"/>
<dbReference type="GenomeRNAi" id="10859"/>
<dbReference type="Pharos" id="Q8NHL6">
    <property type="development level" value="Tbio"/>
</dbReference>
<dbReference type="PRO" id="PR:Q8NHL6"/>
<dbReference type="Proteomes" id="UP000005640">
    <property type="component" value="Unplaced"/>
</dbReference>
<dbReference type="RNAct" id="Q8NHL6">
    <property type="molecule type" value="protein"/>
</dbReference>
<dbReference type="GO" id="GO:0005737">
    <property type="term" value="C:cytoplasm"/>
    <property type="evidence" value="ECO:0000314"/>
    <property type="project" value="UniProtKB"/>
</dbReference>
<dbReference type="GO" id="GO:0009897">
    <property type="term" value="C:external side of plasma membrane"/>
    <property type="evidence" value="ECO:0000314"/>
    <property type="project" value="UniProtKB"/>
</dbReference>
<dbReference type="GO" id="GO:0005576">
    <property type="term" value="C:extracellular region"/>
    <property type="evidence" value="ECO:0007669"/>
    <property type="project" value="UniProtKB-SubCell"/>
</dbReference>
<dbReference type="GO" id="GO:0005886">
    <property type="term" value="C:plasma membrane"/>
    <property type="evidence" value="ECO:0000318"/>
    <property type="project" value="GO_Central"/>
</dbReference>
<dbReference type="GO" id="GO:0030107">
    <property type="term" value="F:HLA-A specific inhibitory MHC class I receptor activity"/>
    <property type="evidence" value="ECO:0000314"/>
    <property type="project" value="UniProtKB"/>
</dbReference>
<dbReference type="GO" id="GO:0030109">
    <property type="term" value="F:HLA-B specific inhibitory MHC class I receptor activity"/>
    <property type="evidence" value="ECO:0000314"/>
    <property type="project" value="UniProtKB"/>
</dbReference>
<dbReference type="GO" id="GO:0032396">
    <property type="term" value="F:inhibitory MHC class I receptor activity"/>
    <property type="evidence" value="ECO:0000318"/>
    <property type="project" value="GO_Central"/>
</dbReference>
<dbReference type="GO" id="GO:0042288">
    <property type="term" value="F:MHC class I protein binding"/>
    <property type="evidence" value="ECO:0000314"/>
    <property type="project" value="UniProtKB"/>
</dbReference>
<dbReference type="GO" id="GO:0032393">
    <property type="term" value="F:MHC class I receptor activity"/>
    <property type="evidence" value="ECO:0000314"/>
    <property type="project" value="UniProtKB"/>
</dbReference>
<dbReference type="GO" id="GO:0023029">
    <property type="term" value="F:MHC class Ib protein binding"/>
    <property type="evidence" value="ECO:0000314"/>
    <property type="project" value="UniProtKB"/>
</dbReference>
<dbReference type="GO" id="GO:0023025">
    <property type="term" value="F:MHC class Ib protein complex binding"/>
    <property type="evidence" value="ECO:0000314"/>
    <property type="project" value="UniProtKB"/>
</dbReference>
<dbReference type="GO" id="GO:0032394">
    <property type="term" value="F:MHC class Ib receptor activity"/>
    <property type="evidence" value="ECO:0000314"/>
    <property type="project" value="UniProtKB"/>
</dbReference>
<dbReference type="GO" id="GO:0042803">
    <property type="term" value="F:protein homodimerization activity"/>
    <property type="evidence" value="ECO:0000353"/>
    <property type="project" value="UniProtKB"/>
</dbReference>
<dbReference type="GO" id="GO:0008157">
    <property type="term" value="F:protein phosphatase 1 binding"/>
    <property type="evidence" value="ECO:0000353"/>
    <property type="project" value="UniProtKB"/>
</dbReference>
<dbReference type="GO" id="GO:0042169">
    <property type="term" value="F:SH2 domain binding"/>
    <property type="evidence" value="ECO:0000314"/>
    <property type="project" value="UniProtKB"/>
</dbReference>
<dbReference type="GO" id="GO:0002250">
    <property type="term" value="P:adaptive immune response"/>
    <property type="evidence" value="ECO:0007669"/>
    <property type="project" value="UniProtKB-KW"/>
</dbReference>
<dbReference type="GO" id="GO:0071222">
    <property type="term" value="P:cellular response to lipopolysaccharide"/>
    <property type="evidence" value="ECO:0000270"/>
    <property type="project" value="UniProtKB"/>
</dbReference>
<dbReference type="GO" id="GO:0051607">
    <property type="term" value="P:defense response to virus"/>
    <property type="evidence" value="ECO:0000314"/>
    <property type="project" value="UniProtKB"/>
</dbReference>
<dbReference type="GO" id="GO:0097028">
    <property type="term" value="P:dendritic cell differentiation"/>
    <property type="evidence" value="ECO:0000270"/>
    <property type="project" value="UniProtKB"/>
</dbReference>
<dbReference type="GO" id="GO:0002774">
    <property type="term" value="P:Fc receptor mediated inhibitory signaling pathway"/>
    <property type="evidence" value="ECO:0000314"/>
    <property type="project" value="UniProtKB"/>
</dbReference>
<dbReference type="GO" id="GO:0002767">
    <property type="term" value="P:immune response-inhibiting cell surface receptor signaling pathway"/>
    <property type="evidence" value="ECO:0000303"/>
    <property type="project" value="BHF-UCL"/>
</dbReference>
<dbReference type="GO" id="GO:0002764">
    <property type="term" value="P:immune response-regulating signaling pathway"/>
    <property type="evidence" value="ECO:0000318"/>
    <property type="project" value="GO_Central"/>
</dbReference>
<dbReference type="GO" id="GO:0140105">
    <property type="term" value="P:interleukin-10-mediated signaling pathway"/>
    <property type="evidence" value="ECO:0000318"/>
    <property type="project" value="GO_Central"/>
</dbReference>
<dbReference type="GO" id="GO:0046636">
    <property type="term" value="P:negative regulation of alpha-beta T cell activation"/>
    <property type="evidence" value="ECO:0000314"/>
    <property type="project" value="UniProtKB"/>
</dbReference>
<dbReference type="GO" id="GO:0051926">
    <property type="term" value="P:negative regulation of calcium ion transport"/>
    <property type="evidence" value="ECO:0000314"/>
    <property type="project" value="UniProtKB"/>
</dbReference>
<dbReference type="GO" id="GO:2001186">
    <property type="term" value="P:negative regulation of CD8-positive, alpha-beta T cell activation"/>
    <property type="evidence" value="ECO:0000314"/>
    <property type="project" value="UniProtKB"/>
</dbReference>
<dbReference type="GO" id="GO:0045786">
    <property type="term" value="P:negative regulation of cell cycle"/>
    <property type="evidence" value="ECO:0000314"/>
    <property type="project" value="UniProtKB"/>
</dbReference>
<dbReference type="GO" id="GO:0002719">
    <property type="term" value="P:negative regulation of cytokine production involved in immune response"/>
    <property type="evidence" value="ECO:0000314"/>
    <property type="project" value="UniProtKB"/>
</dbReference>
<dbReference type="GO" id="GO:2000669">
    <property type="term" value="P:negative regulation of dendritic cell apoptotic process"/>
    <property type="evidence" value="ECO:0000314"/>
    <property type="project" value="UniProtKB"/>
</dbReference>
<dbReference type="GO" id="GO:2001199">
    <property type="term" value="P:negative regulation of dendritic cell differentiation"/>
    <property type="evidence" value="ECO:0000315"/>
    <property type="project" value="UniProtKB"/>
</dbReference>
<dbReference type="GO" id="GO:0045806">
    <property type="term" value="P:negative regulation of endocytosis"/>
    <property type="evidence" value="ECO:0000314"/>
    <property type="project" value="UniProtKB"/>
</dbReference>
<dbReference type="GO" id="GO:0032688">
    <property type="term" value="P:negative regulation of interferon-beta production"/>
    <property type="evidence" value="ECO:0000314"/>
    <property type="project" value="UniProtKB"/>
</dbReference>
<dbReference type="GO" id="GO:0032693">
    <property type="term" value="P:negative regulation of interleukin-10 production"/>
    <property type="evidence" value="ECO:0000314"/>
    <property type="project" value="UniProtKB"/>
</dbReference>
<dbReference type="GO" id="GO:0032695">
    <property type="term" value="P:negative regulation of interleukin-12 production"/>
    <property type="evidence" value="ECO:0000314"/>
    <property type="project" value="UniProtKB"/>
</dbReference>
<dbReference type="GO" id="GO:0032945">
    <property type="term" value="P:negative regulation of mononuclear cell proliferation"/>
    <property type="evidence" value="ECO:0000314"/>
    <property type="project" value="UniProtKB"/>
</dbReference>
<dbReference type="GO" id="GO:0045953">
    <property type="term" value="P:negative regulation of natural killer cell mediated cytotoxicity"/>
    <property type="evidence" value="ECO:0000314"/>
    <property type="project" value="UniProtKB"/>
</dbReference>
<dbReference type="GO" id="GO:2001205">
    <property type="term" value="P:negative regulation of osteoclast development"/>
    <property type="evidence" value="ECO:0000314"/>
    <property type="project" value="UniProtKB"/>
</dbReference>
<dbReference type="GO" id="GO:0014063">
    <property type="term" value="P:negative regulation of serotonin secretion"/>
    <property type="evidence" value="ECO:0000314"/>
    <property type="project" value="UniProtKB"/>
</dbReference>
<dbReference type="GO" id="GO:2001189">
    <property type="term" value="P:negative regulation of T cell activation via T cell receptor contact with antigen bound to MHC molecule on antigen presenting cell"/>
    <property type="evidence" value="ECO:0000314"/>
    <property type="project" value="UniProtKB"/>
</dbReference>
<dbReference type="GO" id="GO:0001915">
    <property type="term" value="P:negative regulation of T cell mediated cytotoxicity"/>
    <property type="evidence" value="ECO:0000314"/>
    <property type="project" value="UniProtKB"/>
</dbReference>
<dbReference type="GO" id="GO:0042130">
    <property type="term" value="P:negative regulation of T cell proliferation"/>
    <property type="evidence" value="ECO:0000314"/>
    <property type="project" value="UniProtKB"/>
</dbReference>
<dbReference type="GO" id="GO:0071635">
    <property type="term" value="P:negative regulation of transforming growth factor beta production"/>
    <property type="evidence" value="ECO:0000314"/>
    <property type="project" value="UniProtKB"/>
</dbReference>
<dbReference type="GO" id="GO:0032720">
    <property type="term" value="P:negative regulation of tumor necrosis factor production"/>
    <property type="evidence" value="ECO:0000314"/>
    <property type="project" value="UniProtKB"/>
</dbReference>
<dbReference type="GO" id="GO:0032689">
    <property type="term" value="P:negative regulation of type II interferon production"/>
    <property type="evidence" value="ECO:0000314"/>
    <property type="project" value="UniProtKB"/>
</dbReference>
<dbReference type="GO" id="GO:0043065">
    <property type="term" value="P:positive regulation of apoptotic process"/>
    <property type="evidence" value="ECO:0000314"/>
    <property type="project" value="UniProtKB"/>
</dbReference>
<dbReference type="GO" id="GO:0002230">
    <property type="term" value="P:positive regulation of defense response to virus by host"/>
    <property type="evidence" value="ECO:0000314"/>
    <property type="project" value="UniProtKB"/>
</dbReference>
<dbReference type="GO" id="GO:2001193">
    <property type="term" value="P:positive regulation of gamma-delta T cell activation involved in immune response"/>
    <property type="evidence" value="ECO:0000314"/>
    <property type="project" value="UniProtKB"/>
</dbReference>
<dbReference type="GO" id="GO:0010628">
    <property type="term" value="P:positive regulation of gene expression"/>
    <property type="evidence" value="ECO:0000314"/>
    <property type="project" value="UniProtKB"/>
</dbReference>
<dbReference type="GO" id="GO:0060907">
    <property type="term" value="P:positive regulation of macrophage cytokine production"/>
    <property type="evidence" value="ECO:0000314"/>
    <property type="project" value="UniProtKB"/>
</dbReference>
<dbReference type="GO" id="GO:0045944">
    <property type="term" value="P:positive regulation of transcription by RNA polymerase II"/>
    <property type="evidence" value="ECO:0000303"/>
    <property type="project" value="BHF-UCL"/>
</dbReference>
<dbReference type="GO" id="GO:0032729">
    <property type="term" value="P:positive regulation of type II interferon production"/>
    <property type="evidence" value="ECO:0000314"/>
    <property type="project" value="UniProtKB"/>
</dbReference>
<dbReference type="GO" id="GO:0031623">
    <property type="term" value="P:receptor internalization"/>
    <property type="evidence" value="ECO:0000304"/>
    <property type="project" value="UniProtKB"/>
</dbReference>
<dbReference type="GO" id="GO:0009615">
    <property type="term" value="P:response to virus"/>
    <property type="evidence" value="ECO:0000314"/>
    <property type="project" value="UniProtKB"/>
</dbReference>
<dbReference type="GO" id="GO:0007165">
    <property type="term" value="P:signal transduction"/>
    <property type="evidence" value="ECO:0000314"/>
    <property type="project" value="UniProtKB"/>
</dbReference>
<dbReference type="GO" id="GO:0002309">
    <property type="term" value="P:T cell proliferation involved in immune response"/>
    <property type="evidence" value="ECO:0000314"/>
    <property type="project" value="UniProtKB"/>
</dbReference>
<dbReference type="CDD" id="cd05751">
    <property type="entry name" value="IgC2_D1_LILR_KIR_like"/>
    <property type="match status" value="1"/>
</dbReference>
<dbReference type="FunFam" id="2.60.40.10:FF:000049">
    <property type="entry name" value="Leukocyte immunoglobulin-like receptor subfamily B member 1"/>
    <property type="match status" value="4"/>
</dbReference>
<dbReference type="Gene3D" id="2.60.40.10">
    <property type="entry name" value="Immunoglobulins"/>
    <property type="match status" value="4"/>
</dbReference>
<dbReference type="InterPro" id="IPR007110">
    <property type="entry name" value="Ig-like_dom"/>
</dbReference>
<dbReference type="InterPro" id="IPR036179">
    <property type="entry name" value="Ig-like_dom_sf"/>
</dbReference>
<dbReference type="InterPro" id="IPR013783">
    <property type="entry name" value="Ig-like_fold"/>
</dbReference>
<dbReference type="InterPro" id="IPR050412">
    <property type="entry name" value="Ig-like_Receptors_ImmuneReg"/>
</dbReference>
<dbReference type="InterPro" id="IPR003599">
    <property type="entry name" value="Ig_sub"/>
</dbReference>
<dbReference type="InterPro" id="IPR003598">
    <property type="entry name" value="Ig_sub2"/>
</dbReference>
<dbReference type="InterPro" id="IPR013151">
    <property type="entry name" value="Immunoglobulin_dom"/>
</dbReference>
<dbReference type="PANTHER" id="PTHR11738:SF165">
    <property type="entry name" value="LEUKOCYTE IMMUNOGLOBULIN-LIKE RECEPTOR SUBFAMILY A MEMBER 1-RELATED"/>
    <property type="match status" value="1"/>
</dbReference>
<dbReference type="PANTHER" id="PTHR11738">
    <property type="entry name" value="MHC CLASS I NK CELL RECEPTOR"/>
    <property type="match status" value="1"/>
</dbReference>
<dbReference type="Pfam" id="PF00047">
    <property type="entry name" value="ig"/>
    <property type="match status" value="1"/>
</dbReference>
<dbReference type="Pfam" id="PF13895">
    <property type="entry name" value="Ig_2"/>
    <property type="match status" value="1"/>
</dbReference>
<dbReference type="SMART" id="SM00409">
    <property type="entry name" value="IG"/>
    <property type="match status" value="4"/>
</dbReference>
<dbReference type="SMART" id="SM00408">
    <property type="entry name" value="IGc2"/>
    <property type="match status" value="3"/>
</dbReference>
<dbReference type="SUPFAM" id="SSF48726">
    <property type="entry name" value="Immunoglobulin"/>
    <property type="match status" value="4"/>
</dbReference>
<dbReference type="PROSITE" id="PS50835">
    <property type="entry name" value="IG_LIKE"/>
    <property type="match status" value="2"/>
</dbReference>
<organism>
    <name type="scientific">Homo sapiens</name>
    <name type="common">Human</name>
    <dbReference type="NCBI Taxonomy" id="9606"/>
    <lineage>
        <taxon>Eukaryota</taxon>
        <taxon>Metazoa</taxon>
        <taxon>Chordata</taxon>
        <taxon>Craniata</taxon>
        <taxon>Vertebrata</taxon>
        <taxon>Euteleostomi</taxon>
        <taxon>Mammalia</taxon>
        <taxon>Eutheria</taxon>
        <taxon>Euarchontoglires</taxon>
        <taxon>Primates</taxon>
        <taxon>Haplorrhini</taxon>
        <taxon>Catarrhini</taxon>
        <taxon>Hominidae</taxon>
        <taxon>Homo</taxon>
    </lineage>
</organism>
<evidence type="ECO:0000255" key="1"/>
<evidence type="ECO:0000255" key="2">
    <source>
        <dbReference type="PROSITE-ProRule" id="PRU00114"/>
    </source>
</evidence>
<evidence type="ECO:0000256" key="3">
    <source>
        <dbReference type="SAM" id="MobiDB-lite"/>
    </source>
</evidence>
<evidence type="ECO:0000269" key="4">
    <source>
    </source>
</evidence>
<evidence type="ECO:0000269" key="5">
    <source>
    </source>
</evidence>
<evidence type="ECO:0000269" key="6">
    <source>
    </source>
</evidence>
<evidence type="ECO:0000269" key="7">
    <source>
    </source>
</evidence>
<evidence type="ECO:0000269" key="8">
    <source>
    </source>
</evidence>
<evidence type="ECO:0000269" key="9">
    <source>
    </source>
</evidence>
<evidence type="ECO:0000269" key="10">
    <source>
    </source>
</evidence>
<evidence type="ECO:0000269" key="11">
    <source>
    </source>
</evidence>
<evidence type="ECO:0000269" key="12">
    <source>
    </source>
</evidence>
<evidence type="ECO:0000269" key="13">
    <source>
    </source>
</evidence>
<evidence type="ECO:0000269" key="14">
    <source>
    </source>
</evidence>
<evidence type="ECO:0000269" key="15">
    <source>
    </source>
</evidence>
<evidence type="ECO:0000269" key="16">
    <source>
    </source>
</evidence>
<evidence type="ECO:0000269" key="17">
    <source>
    </source>
</evidence>
<evidence type="ECO:0000303" key="18">
    <source>
    </source>
</evidence>
<evidence type="ECO:0000303" key="19">
    <source>
    </source>
</evidence>
<evidence type="ECO:0000303" key="20">
    <source>
    </source>
</evidence>
<evidence type="ECO:0000303" key="21">
    <source>
    </source>
</evidence>
<evidence type="ECO:0000303" key="22">
    <source>
    </source>
</evidence>
<evidence type="ECO:0000303" key="23">
    <source>
    </source>
</evidence>
<evidence type="ECO:0000303" key="24">
    <source>
    </source>
</evidence>
<evidence type="ECO:0000303" key="25">
    <source>
    </source>
</evidence>
<evidence type="ECO:0000305" key="26"/>
<evidence type="ECO:0000305" key="27">
    <source>
    </source>
</evidence>
<evidence type="ECO:0000305" key="28">
    <source>
    </source>
</evidence>
<evidence type="ECO:0000312" key="29">
    <source>
        <dbReference type="HGNC" id="HGNC:6605"/>
    </source>
</evidence>
<evidence type="ECO:0007744" key="30">
    <source>
        <dbReference type="PDB" id="1G0X"/>
    </source>
</evidence>
<evidence type="ECO:0007829" key="31">
    <source>
        <dbReference type="PDB" id="1G0X"/>
    </source>
</evidence>
<evidence type="ECO:0007829" key="32">
    <source>
        <dbReference type="PDB" id="1UGN"/>
    </source>
</evidence>
<evidence type="ECO:0007829" key="33">
    <source>
        <dbReference type="PDB" id="1VDG"/>
    </source>
</evidence>
<evidence type="ECO:0007829" key="34">
    <source>
        <dbReference type="PDB" id="3D2U"/>
    </source>
</evidence>
<evidence type="ECO:0007829" key="35">
    <source>
        <dbReference type="PDB" id="4LL9"/>
    </source>
</evidence>
<evidence type="ECO:0007829" key="36">
    <source>
        <dbReference type="PDB" id="6EWA"/>
    </source>
</evidence>
<evidence type="ECO:0007829" key="37">
    <source>
        <dbReference type="PDB" id="6ZDX"/>
    </source>
</evidence>
<evidence type="ECO:0007829" key="38">
    <source>
        <dbReference type="PDB" id="7KFK"/>
    </source>
</evidence>
<name>LIRB1_HUMAN</name>
<accession>Q8NHL6</accession>
<accession>A2IXV4</accession>
<accession>A8MXT0</accession>
<accession>O75024</accession>
<accession>O75025</accession>
<accession>Q8NHJ9</accession>
<accession>Q8NHK0</accession>